<feature type="chain" id="PRO_0000234879" description="Large ribosomal subunit protein uL10">
    <location>
        <begin position="1"/>
        <end position="171"/>
    </location>
</feature>
<organism>
    <name type="scientific">Cereibacter sphaeroides (strain ATCC 17023 / DSM 158 / JCM 6121 / CCUG 31486 / LMG 2827 / NBRC 12203 / NCIMB 8253 / ATH 2.4.1.)</name>
    <name type="common">Rhodobacter sphaeroides</name>
    <dbReference type="NCBI Taxonomy" id="272943"/>
    <lineage>
        <taxon>Bacteria</taxon>
        <taxon>Pseudomonadati</taxon>
        <taxon>Pseudomonadota</taxon>
        <taxon>Alphaproteobacteria</taxon>
        <taxon>Rhodobacterales</taxon>
        <taxon>Paracoccaceae</taxon>
        <taxon>Cereibacter</taxon>
    </lineage>
</organism>
<comment type="function">
    <text evidence="1">Forms part of the ribosomal stalk, playing a central role in the interaction of the ribosome with GTP-bound translation factors.</text>
</comment>
<comment type="subunit">
    <text evidence="1">Part of the ribosomal stalk of the 50S ribosomal subunit. The N-terminus interacts with L11 and the large rRNA to form the base of the stalk. The C-terminus forms an elongated spine to which L12 dimers bind in a sequential fashion forming a multimeric L10(L12)X complex.</text>
</comment>
<comment type="similarity">
    <text evidence="1">Belongs to the universal ribosomal protein uL10 family.</text>
</comment>
<keyword id="KW-1185">Reference proteome</keyword>
<keyword id="KW-0687">Ribonucleoprotein</keyword>
<keyword id="KW-0689">Ribosomal protein</keyword>
<keyword id="KW-0694">RNA-binding</keyword>
<keyword id="KW-0699">rRNA-binding</keyword>
<sequence length="171" mass="17683">MDRAQKEKVVEELGQIFESSGVVVVAHYAGITVAQMQDLRAQMREVGGSVRVAKNRLAKIALAGKPSEKMGDLLTGMTVMAYSEDPVAAAKVADAYAKKNDKFVILGGAMGDTILDPAGVKTVAAMPSREELIAQIVSCIGAPASNIAGAIGAPASNIAGILSTLEEREAA</sequence>
<name>RL10_CERS4</name>
<reference key="1">
    <citation type="submission" date="2005-09" db="EMBL/GenBank/DDBJ databases">
        <title>Complete sequence of chromosome 1 of Rhodobacter sphaeroides 2.4.1.</title>
        <authorList>
            <person name="Copeland A."/>
            <person name="Lucas S."/>
            <person name="Lapidus A."/>
            <person name="Barry K."/>
            <person name="Detter J.C."/>
            <person name="Glavina T."/>
            <person name="Hammon N."/>
            <person name="Israni S."/>
            <person name="Pitluck S."/>
            <person name="Richardson P."/>
            <person name="Mackenzie C."/>
            <person name="Choudhary M."/>
            <person name="Larimer F."/>
            <person name="Hauser L.J."/>
            <person name="Land M."/>
            <person name="Donohue T.J."/>
            <person name="Kaplan S."/>
        </authorList>
    </citation>
    <scope>NUCLEOTIDE SEQUENCE [LARGE SCALE GENOMIC DNA]</scope>
    <source>
        <strain>ATCC 17023 / DSM 158 / JCM 6121 / CCUG 31486 / LMG 2827 / NBRC 12203 / NCIMB 8253 / ATH 2.4.1.</strain>
    </source>
</reference>
<evidence type="ECO:0000255" key="1">
    <source>
        <dbReference type="HAMAP-Rule" id="MF_00362"/>
    </source>
</evidence>
<evidence type="ECO:0000305" key="2"/>
<dbReference type="EMBL" id="CP000143">
    <property type="protein sequence ID" value="ABA77852.1"/>
    <property type="molecule type" value="Genomic_DNA"/>
</dbReference>
<dbReference type="RefSeq" id="WP_002722476.1">
    <property type="nucleotide sequence ID" value="NZ_CP030271.1"/>
</dbReference>
<dbReference type="RefSeq" id="YP_351753.1">
    <property type="nucleotide sequence ID" value="NC_007493.2"/>
</dbReference>
<dbReference type="SMR" id="Q3J5T2"/>
<dbReference type="STRING" id="272943.RSP_1701"/>
<dbReference type="EnsemblBacteria" id="ABA77852">
    <property type="protein sequence ID" value="ABA77852"/>
    <property type="gene ID" value="RSP_1701"/>
</dbReference>
<dbReference type="GeneID" id="67445490"/>
<dbReference type="KEGG" id="rsp:RSP_1701"/>
<dbReference type="PATRIC" id="fig|272943.9.peg.582"/>
<dbReference type="eggNOG" id="COG0244">
    <property type="taxonomic scope" value="Bacteria"/>
</dbReference>
<dbReference type="OrthoDB" id="9791972at2"/>
<dbReference type="PhylomeDB" id="Q3J5T2"/>
<dbReference type="Proteomes" id="UP000002703">
    <property type="component" value="Chromosome 1"/>
</dbReference>
<dbReference type="GO" id="GO:0015934">
    <property type="term" value="C:large ribosomal subunit"/>
    <property type="evidence" value="ECO:0007669"/>
    <property type="project" value="InterPro"/>
</dbReference>
<dbReference type="GO" id="GO:0070180">
    <property type="term" value="F:large ribosomal subunit rRNA binding"/>
    <property type="evidence" value="ECO:0007669"/>
    <property type="project" value="UniProtKB-UniRule"/>
</dbReference>
<dbReference type="GO" id="GO:0003735">
    <property type="term" value="F:structural constituent of ribosome"/>
    <property type="evidence" value="ECO:0007669"/>
    <property type="project" value="InterPro"/>
</dbReference>
<dbReference type="GO" id="GO:0006412">
    <property type="term" value="P:translation"/>
    <property type="evidence" value="ECO:0007669"/>
    <property type="project" value="UniProtKB-UniRule"/>
</dbReference>
<dbReference type="CDD" id="cd05797">
    <property type="entry name" value="Ribosomal_L10"/>
    <property type="match status" value="1"/>
</dbReference>
<dbReference type="Gene3D" id="3.30.70.1730">
    <property type="match status" value="1"/>
</dbReference>
<dbReference type="Gene3D" id="6.10.250.290">
    <property type="match status" value="1"/>
</dbReference>
<dbReference type="HAMAP" id="MF_00362">
    <property type="entry name" value="Ribosomal_uL10"/>
    <property type="match status" value="1"/>
</dbReference>
<dbReference type="InterPro" id="IPR001790">
    <property type="entry name" value="Ribosomal_uL10"/>
</dbReference>
<dbReference type="InterPro" id="IPR043141">
    <property type="entry name" value="Ribosomal_uL10-like_sf"/>
</dbReference>
<dbReference type="InterPro" id="IPR022973">
    <property type="entry name" value="Ribosomal_uL10_bac"/>
</dbReference>
<dbReference type="InterPro" id="IPR047865">
    <property type="entry name" value="Ribosomal_uL10_bac_type"/>
</dbReference>
<dbReference type="InterPro" id="IPR002363">
    <property type="entry name" value="Ribosomal_uL10_CS_bac"/>
</dbReference>
<dbReference type="NCBIfam" id="NF000955">
    <property type="entry name" value="PRK00099.1-1"/>
    <property type="match status" value="1"/>
</dbReference>
<dbReference type="PANTHER" id="PTHR11560">
    <property type="entry name" value="39S RIBOSOMAL PROTEIN L10, MITOCHONDRIAL"/>
    <property type="match status" value="1"/>
</dbReference>
<dbReference type="Pfam" id="PF00466">
    <property type="entry name" value="Ribosomal_L10"/>
    <property type="match status" value="1"/>
</dbReference>
<dbReference type="SUPFAM" id="SSF160369">
    <property type="entry name" value="Ribosomal protein L10-like"/>
    <property type="match status" value="1"/>
</dbReference>
<dbReference type="PROSITE" id="PS01109">
    <property type="entry name" value="RIBOSOMAL_L10"/>
    <property type="match status" value="1"/>
</dbReference>
<accession>Q3J5T2</accession>
<proteinExistence type="inferred from homology"/>
<protein>
    <recommendedName>
        <fullName evidence="1">Large ribosomal subunit protein uL10</fullName>
    </recommendedName>
    <alternativeName>
        <fullName evidence="2">50S ribosomal protein L10</fullName>
    </alternativeName>
</protein>
<gene>
    <name evidence="1" type="primary">rplJ</name>
    <name type="ordered locus">RHOS4_02840</name>
    <name type="ORF">RSP_1701</name>
</gene>